<accession>Q83BB0</accession>
<organism>
    <name type="scientific">Coxiella burnetii (strain RSA 493 / Nine Mile phase I)</name>
    <dbReference type="NCBI Taxonomy" id="227377"/>
    <lineage>
        <taxon>Bacteria</taxon>
        <taxon>Pseudomonadati</taxon>
        <taxon>Pseudomonadota</taxon>
        <taxon>Gammaproteobacteria</taxon>
        <taxon>Legionellales</taxon>
        <taxon>Coxiellaceae</taxon>
        <taxon>Coxiella</taxon>
    </lineage>
</organism>
<dbReference type="EC" id="6.3.2.-" evidence="1"/>
<dbReference type="EMBL" id="AE016828">
    <property type="protein sequence ID" value="AAO91099.1"/>
    <property type="molecule type" value="Genomic_DNA"/>
</dbReference>
<dbReference type="RefSeq" id="NP_820585.1">
    <property type="nucleotide sequence ID" value="NC_002971.4"/>
</dbReference>
<dbReference type="RefSeq" id="WP_005769646.1">
    <property type="nucleotide sequence ID" value="NZ_CCYB01000015.1"/>
</dbReference>
<dbReference type="SMR" id="Q83BB0"/>
<dbReference type="STRING" id="227377.CBU_1602"/>
<dbReference type="EnsemblBacteria" id="AAO91099">
    <property type="protein sequence ID" value="AAO91099"/>
    <property type="gene ID" value="CBU_1602"/>
</dbReference>
<dbReference type="GeneID" id="1209513"/>
<dbReference type="KEGG" id="cbu:CBU_1602"/>
<dbReference type="PATRIC" id="fig|227377.7.peg.1602"/>
<dbReference type="eggNOG" id="COG0189">
    <property type="taxonomic scope" value="Bacteria"/>
</dbReference>
<dbReference type="HOGENOM" id="CLU_054353_0_1_6"/>
<dbReference type="OrthoDB" id="3865600at2"/>
<dbReference type="Proteomes" id="UP000002671">
    <property type="component" value="Chromosome"/>
</dbReference>
<dbReference type="GO" id="GO:0005737">
    <property type="term" value="C:cytoplasm"/>
    <property type="evidence" value="ECO:0000318"/>
    <property type="project" value="GO_Central"/>
</dbReference>
<dbReference type="GO" id="GO:0005524">
    <property type="term" value="F:ATP binding"/>
    <property type="evidence" value="ECO:0007669"/>
    <property type="project" value="UniProtKB-UniRule"/>
</dbReference>
<dbReference type="GO" id="GO:0046872">
    <property type="term" value="F:metal ion binding"/>
    <property type="evidence" value="ECO:0007669"/>
    <property type="project" value="UniProtKB-KW"/>
</dbReference>
<dbReference type="GO" id="GO:0018169">
    <property type="term" value="F:ribosomal S6-glutamic acid ligase activity"/>
    <property type="evidence" value="ECO:0000318"/>
    <property type="project" value="GO_Central"/>
</dbReference>
<dbReference type="GO" id="GO:0036211">
    <property type="term" value="P:protein modification process"/>
    <property type="evidence" value="ECO:0007669"/>
    <property type="project" value="InterPro"/>
</dbReference>
<dbReference type="GO" id="GO:0009432">
    <property type="term" value="P:SOS response"/>
    <property type="evidence" value="ECO:0000318"/>
    <property type="project" value="GO_Central"/>
</dbReference>
<dbReference type="GO" id="GO:0006412">
    <property type="term" value="P:translation"/>
    <property type="evidence" value="ECO:0007669"/>
    <property type="project" value="UniProtKB-KW"/>
</dbReference>
<dbReference type="FunFam" id="3.40.50.20:FF:000004">
    <property type="entry name" value="Probable alpha-L-glutamate ligase"/>
    <property type="match status" value="1"/>
</dbReference>
<dbReference type="FunFam" id="3.30.1490.20:FF:000005">
    <property type="entry name" value="Probable alpha-L-glutamate ligase 1"/>
    <property type="match status" value="1"/>
</dbReference>
<dbReference type="FunFam" id="3.30.470.20:FF:000016">
    <property type="entry name" value="Ribosomal protein S6--L-glutamate ligase"/>
    <property type="match status" value="1"/>
</dbReference>
<dbReference type="Gene3D" id="3.40.50.20">
    <property type="match status" value="1"/>
</dbReference>
<dbReference type="Gene3D" id="3.30.1490.20">
    <property type="entry name" value="ATP-grasp fold, A domain"/>
    <property type="match status" value="1"/>
</dbReference>
<dbReference type="Gene3D" id="3.30.470.20">
    <property type="entry name" value="ATP-grasp fold, B domain"/>
    <property type="match status" value="1"/>
</dbReference>
<dbReference type="HAMAP" id="MF_01552">
    <property type="entry name" value="RimK"/>
    <property type="match status" value="1"/>
</dbReference>
<dbReference type="InterPro" id="IPR011761">
    <property type="entry name" value="ATP-grasp"/>
</dbReference>
<dbReference type="InterPro" id="IPR013651">
    <property type="entry name" value="ATP-grasp_RimK-type"/>
</dbReference>
<dbReference type="InterPro" id="IPR013815">
    <property type="entry name" value="ATP_grasp_subdomain_1"/>
</dbReference>
<dbReference type="InterPro" id="IPR023533">
    <property type="entry name" value="RimK"/>
</dbReference>
<dbReference type="InterPro" id="IPR041107">
    <property type="entry name" value="Rimk_N"/>
</dbReference>
<dbReference type="InterPro" id="IPR004666">
    <property type="entry name" value="Rp_bS6_RimK/Lys_biosynth_LsyX"/>
</dbReference>
<dbReference type="NCBIfam" id="NF007764">
    <property type="entry name" value="PRK10446.1"/>
    <property type="match status" value="1"/>
</dbReference>
<dbReference type="NCBIfam" id="TIGR00768">
    <property type="entry name" value="rimK_fam"/>
    <property type="match status" value="1"/>
</dbReference>
<dbReference type="PANTHER" id="PTHR21621:SF7">
    <property type="entry name" value="RIBOSOMAL PROTEIN BS6--L-GLUTAMATE LIGASE"/>
    <property type="match status" value="1"/>
</dbReference>
<dbReference type="PANTHER" id="PTHR21621">
    <property type="entry name" value="RIBOSOMAL PROTEIN S6 MODIFICATION PROTEIN"/>
    <property type="match status" value="1"/>
</dbReference>
<dbReference type="Pfam" id="PF08443">
    <property type="entry name" value="RimK"/>
    <property type="match status" value="1"/>
</dbReference>
<dbReference type="Pfam" id="PF18030">
    <property type="entry name" value="Rimk_N"/>
    <property type="match status" value="1"/>
</dbReference>
<dbReference type="SUPFAM" id="SSF56059">
    <property type="entry name" value="Glutathione synthetase ATP-binding domain-like"/>
    <property type="match status" value="1"/>
</dbReference>
<dbReference type="PROSITE" id="PS50975">
    <property type="entry name" value="ATP_GRASP"/>
    <property type="match status" value="1"/>
</dbReference>
<gene>
    <name evidence="1" type="primary">rimK</name>
    <name type="ordered locus">CBU_1602</name>
</gene>
<feature type="chain" id="PRO_0000205452" description="Probable alpha-L-glutamate ligase">
    <location>
        <begin position="1"/>
        <end position="301"/>
    </location>
</feature>
<feature type="domain" description="ATP-grasp" evidence="1">
    <location>
        <begin position="104"/>
        <end position="287"/>
    </location>
</feature>
<feature type="binding site" evidence="1">
    <location>
        <position position="141"/>
    </location>
    <ligand>
        <name>ATP</name>
        <dbReference type="ChEBI" id="CHEBI:30616"/>
    </ligand>
</feature>
<feature type="binding site" evidence="1">
    <location>
        <begin position="178"/>
        <end position="179"/>
    </location>
    <ligand>
        <name>ATP</name>
        <dbReference type="ChEBI" id="CHEBI:30616"/>
    </ligand>
</feature>
<feature type="binding site" evidence="1">
    <location>
        <position position="187"/>
    </location>
    <ligand>
        <name>ATP</name>
        <dbReference type="ChEBI" id="CHEBI:30616"/>
    </ligand>
</feature>
<feature type="binding site" evidence="1">
    <location>
        <begin position="211"/>
        <end position="213"/>
    </location>
    <ligand>
        <name>ATP</name>
        <dbReference type="ChEBI" id="CHEBI:30616"/>
    </ligand>
</feature>
<feature type="binding site" evidence="1">
    <location>
        <position position="248"/>
    </location>
    <ligand>
        <name>Mg(2+)</name>
        <dbReference type="ChEBI" id="CHEBI:18420"/>
        <label>1</label>
    </ligand>
</feature>
<feature type="binding site" evidence="1">
    <location>
        <position position="248"/>
    </location>
    <ligand>
        <name>Mn(2+)</name>
        <dbReference type="ChEBI" id="CHEBI:29035"/>
        <label>1</label>
    </ligand>
</feature>
<feature type="binding site" evidence="1">
    <location>
        <position position="260"/>
    </location>
    <ligand>
        <name>Mg(2+)</name>
        <dbReference type="ChEBI" id="CHEBI:18420"/>
        <label>1</label>
    </ligand>
</feature>
<feature type="binding site" evidence="1">
    <location>
        <position position="260"/>
    </location>
    <ligand>
        <name>Mg(2+)</name>
        <dbReference type="ChEBI" id="CHEBI:18420"/>
        <label>2</label>
    </ligand>
</feature>
<feature type="binding site" evidence="1">
    <location>
        <position position="260"/>
    </location>
    <ligand>
        <name>Mn(2+)</name>
        <dbReference type="ChEBI" id="CHEBI:29035"/>
        <label>1</label>
    </ligand>
</feature>
<feature type="binding site" evidence="1">
    <location>
        <position position="260"/>
    </location>
    <ligand>
        <name>Mn(2+)</name>
        <dbReference type="ChEBI" id="CHEBI:29035"/>
        <label>2</label>
    </ligand>
</feature>
<feature type="binding site" evidence="1">
    <location>
        <position position="262"/>
    </location>
    <ligand>
        <name>Mg(2+)</name>
        <dbReference type="ChEBI" id="CHEBI:18420"/>
        <label>2</label>
    </ligand>
</feature>
<feature type="binding site" evidence="1">
    <location>
        <position position="262"/>
    </location>
    <ligand>
        <name>Mn(2+)</name>
        <dbReference type="ChEBI" id="CHEBI:29035"/>
        <label>2</label>
    </ligand>
</feature>
<protein>
    <recommendedName>
        <fullName evidence="1">Probable alpha-L-glutamate ligase</fullName>
        <ecNumber evidence="1">6.3.2.-</ecNumber>
    </recommendedName>
</protein>
<evidence type="ECO:0000255" key="1">
    <source>
        <dbReference type="HAMAP-Rule" id="MF_01552"/>
    </source>
</evidence>
<comment type="cofactor">
    <cofactor evidence="1">
        <name>Mg(2+)</name>
        <dbReference type="ChEBI" id="CHEBI:18420"/>
    </cofactor>
    <cofactor evidence="1">
        <name>Mn(2+)</name>
        <dbReference type="ChEBI" id="CHEBI:29035"/>
    </cofactor>
    <text evidence="1">Binds 2 magnesium or manganese ions per subunit.</text>
</comment>
<comment type="similarity">
    <text evidence="1">Belongs to the RimK family.</text>
</comment>
<name>RIMK_COXBU</name>
<sequence length="301" mass="33192">MKIAILSTKQELSSTQRLKEAALARGHKVKIINTLRCYMSLSQEKPTIHYMGKELARYDAVIPRIGASITFYGTAVVRQFEMMGTFCLNSSMSITRSRDKFRSLQFLSRKGIDLPITGFAHSPDDIEDLIQMVGGTPLIIKLIEGTQGIGVVLAETKKAAESVIQAFLGLKVNILIQEFIGETQGRDIRCFVIGNKVVATMQREARPGDFRSNVHRGGTTKLIKITPQEREISINAAKALGLNVAGVDLLRSKRGPLVLEVNSSPGLEGIENITKKDIAGMIIEFIEKNAKPIKAYSRYQG</sequence>
<proteinExistence type="inferred from homology"/>
<reference key="1">
    <citation type="journal article" date="2003" name="Proc. Natl. Acad. Sci. U.S.A.">
        <title>Complete genome sequence of the Q-fever pathogen, Coxiella burnetii.</title>
        <authorList>
            <person name="Seshadri R."/>
            <person name="Paulsen I.T."/>
            <person name="Eisen J.A."/>
            <person name="Read T.D."/>
            <person name="Nelson K.E."/>
            <person name="Nelson W.C."/>
            <person name="Ward N.L."/>
            <person name="Tettelin H."/>
            <person name="Davidsen T.M."/>
            <person name="Beanan M.J."/>
            <person name="DeBoy R.T."/>
            <person name="Daugherty S.C."/>
            <person name="Brinkac L.M."/>
            <person name="Madupu R."/>
            <person name="Dodson R.J."/>
            <person name="Khouri H.M."/>
            <person name="Lee K.H."/>
            <person name="Carty H.A."/>
            <person name="Scanlan D."/>
            <person name="Heinzen R.A."/>
            <person name="Thompson H.A."/>
            <person name="Samuel J.E."/>
            <person name="Fraser C.M."/>
            <person name="Heidelberg J.F."/>
        </authorList>
    </citation>
    <scope>NUCLEOTIDE SEQUENCE [LARGE SCALE GENOMIC DNA]</scope>
    <source>
        <strain>RSA 493 / Nine Mile phase I</strain>
    </source>
</reference>
<keyword id="KW-0067">ATP-binding</keyword>
<keyword id="KW-0436">Ligase</keyword>
<keyword id="KW-0460">Magnesium</keyword>
<keyword id="KW-0464">Manganese</keyword>
<keyword id="KW-0479">Metal-binding</keyword>
<keyword id="KW-0547">Nucleotide-binding</keyword>
<keyword id="KW-0648">Protein biosynthesis</keyword>
<keyword id="KW-1185">Reference proteome</keyword>